<evidence type="ECO:0000255" key="1">
    <source>
        <dbReference type="HAMAP-Rule" id="MF_00068"/>
    </source>
</evidence>
<dbReference type="EC" id="4.2.1.126" evidence="1"/>
<dbReference type="EMBL" id="CP001176">
    <property type="protein sequence ID" value="ACK58923.1"/>
    <property type="molecule type" value="Genomic_DNA"/>
</dbReference>
<dbReference type="RefSeq" id="WP_000892348.1">
    <property type="nucleotide sequence ID" value="NC_011725.1"/>
</dbReference>
<dbReference type="SMR" id="B7HER4"/>
<dbReference type="KEGG" id="bcb:BCB4264_A0876"/>
<dbReference type="HOGENOM" id="CLU_049049_1_1_9"/>
<dbReference type="UniPathway" id="UPA00342"/>
<dbReference type="Proteomes" id="UP000007096">
    <property type="component" value="Chromosome"/>
</dbReference>
<dbReference type="GO" id="GO:0097367">
    <property type="term" value="F:carbohydrate derivative binding"/>
    <property type="evidence" value="ECO:0007669"/>
    <property type="project" value="InterPro"/>
</dbReference>
<dbReference type="GO" id="GO:0016835">
    <property type="term" value="F:carbon-oxygen lyase activity"/>
    <property type="evidence" value="ECO:0007669"/>
    <property type="project" value="UniProtKB-UniRule"/>
</dbReference>
<dbReference type="GO" id="GO:0016803">
    <property type="term" value="F:ether hydrolase activity"/>
    <property type="evidence" value="ECO:0007669"/>
    <property type="project" value="TreeGrafter"/>
</dbReference>
<dbReference type="GO" id="GO:0046348">
    <property type="term" value="P:amino sugar catabolic process"/>
    <property type="evidence" value="ECO:0007669"/>
    <property type="project" value="InterPro"/>
</dbReference>
<dbReference type="GO" id="GO:0097173">
    <property type="term" value="P:N-acetylmuramic acid catabolic process"/>
    <property type="evidence" value="ECO:0007669"/>
    <property type="project" value="UniProtKB-UniPathway"/>
</dbReference>
<dbReference type="GO" id="GO:0009254">
    <property type="term" value="P:peptidoglycan turnover"/>
    <property type="evidence" value="ECO:0007669"/>
    <property type="project" value="TreeGrafter"/>
</dbReference>
<dbReference type="CDD" id="cd05007">
    <property type="entry name" value="SIS_Etherase"/>
    <property type="match status" value="1"/>
</dbReference>
<dbReference type="FunFam" id="1.10.8.1080:FF:000001">
    <property type="entry name" value="N-acetylmuramic acid 6-phosphate etherase"/>
    <property type="match status" value="1"/>
</dbReference>
<dbReference type="FunFam" id="3.40.50.10490:FF:000014">
    <property type="entry name" value="N-acetylmuramic acid 6-phosphate etherase"/>
    <property type="match status" value="1"/>
</dbReference>
<dbReference type="Gene3D" id="1.10.8.1080">
    <property type="match status" value="1"/>
</dbReference>
<dbReference type="Gene3D" id="3.40.50.10490">
    <property type="entry name" value="Glucose-6-phosphate isomerase like protein, domain 1"/>
    <property type="match status" value="1"/>
</dbReference>
<dbReference type="HAMAP" id="MF_00068">
    <property type="entry name" value="MurQ"/>
    <property type="match status" value="1"/>
</dbReference>
<dbReference type="InterPro" id="IPR005488">
    <property type="entry name" value="Etherase_MurQ"/>
</dbReference>
<dbReference type="InterPro" id="IPR005486">
    <property type="entry name" value="Glucokinase_regulatory_CS"/>
</dbReference>
<dbReference type="InterPro" id="IPR040190">
    <property type="entry name" value="MURQ/GCKR"/>
</dbReference>
<dbReference type="InterPro" id="IPR001347">
    <property type="entry name" value="SIS_dom"/>
</dbReference>
<dbReference type="InterPro" id="IPR046348">
    <property type="entry name" value="SIS_dom_sf"/>
</dbReference>
<dbReference type="NCBIfam" id="TIGR00274">
    <property type="entry name" value="N-acetylmuramic acid 6-phosphate etherase"/>
    <property type="match status" value="1"/>
</dbReference>
<dbReference type="NCBIfam" id="NF003915">
    <property type="entry name" value="PRK05441.1"/>
    <property type="match status" value="1"/>
</dbReference>
<dbReference type="NCBIfam" id="NF009222">
    <property type="entry name" value="PRK12570.1"/>
    <property type="match status" value="1"/>
</dbReference>
<dbReference type="PANTHER" id="PTHR10088">
    <property type="entry name" value="GLUCOKINASE REGULATORY PROTEIN"/>
    <property type="match status" value="1"/>
</dbReference>
<dbReference type="PANTHER" id="PTHR10088:SF4">
    <property type="entry name" value="GLUCOKINASE REGULATORY PROTEIN"/>
    <property type="match status" value="1"/>
</dbReference>
<dbReference type="Pfam" id="PF22645">
    <property type="entry name" value="GKRP_SIS_N"/>
    <property type="match status" value="1"/>
</dbReference>
<dbReference type="SUPFAM" id="SSF53697">
    <property type="entry name" value="SIS domain"/>
    <property type="match status" value="1"/>
</dbReference>
<dbReference type="PROSITE" id="PS01272">
    <property type="entry name" value="GCKR"/>
    <property type="match status" value="1"/>
</dbReference>
<dbReference type="PROSITE" id="PS51464">
    <property type="entry name" value="SIS"/>
    <property type="match status" value="1"/>
</dbReference>
<sequence length="294" mass="31994">MLENLSTEHRNEKTMNLDEMSIKEVLQSMNEEDRTVALAVEKEIEQIEKVVQTVIKSFEEEGRLIYIGAGTSGRLGILDAVECPPTFGTDDKMVQGFIAGGLKAFTKAVEGAEDREELAEEDLKSIGLNEKDTVIGIAASGRTPYVIGGLKYAQSVGASTASISCNKNAEISKYAKLNVEVETGAEILTGSTRLKAGTAQKLVLNMISTASMIGVGKVYKNLMVDVQSTNEKLVERSKRIIVEATGASYEVATEYYEKAERNVKAAIVMVLLQCEYGEALEKLKYAKGFVKKAL</sequence>
<protein>
    <recommendedName>
        <fullName evidence="1">N-acetylmuramic acid 6-phosphate etherase</fullName>
        <shortName evidence="1">MurNAc-6-P etherase</shortName>
        <ecNumber evidence="1">4.2.1.126</ecNumber>
    </recommendedName>
    <alternativeName>
        <fullName evidence="1">N-acetylmuramic acid 6-phosphate hydrolase</fullName>
    </alternativeName>
    <alternativeName>
        <fullName evidence="1">N-acetylmuramic acid 6-phosphate lyase</fullName>
    </alternativeName>
</protein>
<keyword id="KW-0119">Carbohydrate metabolism</keyword>
<keyword id="KW-0456">Lyase</keyword>
<feature type="chain" id="PRO_1000116988" description="N-acetylmuramic acid 6-phosphate etherase">
    <location>
        <begin position="1"/>
        <end position="294"/>
    </location>
</feature>
<feature type="domain" description="SIS" evidence="1">
    <location>
        <begin position="54"/>
        <end position="217"/>
    </location>
</feature>
<feature type="active site" description="Proton donor" evidence="1">
    <location>
        <position position="82"/>
    </location>
</feature>
<feature type="active site" evidence="1">
    <location>
        <position position="113"/>
    </location>
</feature>
<gene>
    <name evidence="1" type="primary">murQ</name>
    <name type="ordered locus">BCB4264_A0876</name>
</gene>
<organism>
    <name type="scientific">Bacillus cereus (strain B4264)</name>
    <dbReference type="NCBI Taxonomy" id="405532"/>
    <lineage>
        <taxon>Bacteria</taxon>
        <taxon>Bacillati</taxon>
        <taxon>Bacillota</taxon>
        <taxon>Bacilli</taxon>
        <taxon>Bacillales</taxon>
        <taxon>Bacillaceae</taxon>
        <taxon>Bacillus</taxon>
        <taxon>Bacillus cereus group</taxon>
    </lineage>
</organism>
<name>MURQ_BACC4</name>
<proteinExistence type="inferred from homology"/>
<comment type="function">
    <text evidence="1">Specifically catalyzes the cleavage of the D-lactyl ether substituent of MurNAc 6-phosphate, producing GlcNAc 6-phosphate and D-lactate.</text>
</comment>
<comment type="catalytic activity">
    <reaction evidence="1">
        <text>N-acetyl-D-muramate 6-phosphate + H2O = N-acetyl-D-glucosamine 6-phosphate + (R)-lactate</text>
        <dbReference type="Rhea" id="RHEA:26410"/>
        <dbReference type="ChEBI" id="CHEBI:15377"/>
        <dbReference type="ChEBI" id="CHEBI:16004"/>
        <dbReference type="ChEBI" id="CHEBI:57513"/>
        <dbReference type="ChEBI" id="CHEBI:58722"/>
        <dbReference type="EC" id="4.2.1.126"/>
    </reaction>
</comment>
<comment type="pathway">
    <text evidence="1">Amino-sugar metabolism; N-acetylmuramate degradation.</text>
</comment>
<comment type="subunit">
    <text evidence="1">Homodimer.</text>
</comment>
<comment type="miscellaneous">
    <text evidence="1">A lyase-type mechanism (elimination/hydration) is suggested for the cleavage of the lactyl ether bond of MurNAc 6-phosphate, with the formation of an alpha,beta-unsaturated aldehyde intermediate with (E)-stereochemistry, followed by the syn addition of water to give product.</text>
</comment>
<comment type="similarity">
    <text evidence="1">Belongs to the GCKR-like family. MurNAc-6-P etherase subfamily.</text>
</comment>
<accession>B7HER4</accession>
<reference key="1">
    <citation type="submission" date="2008-10" db="EMBL/GenBank/DDBJ databases">
        <title>Genome sequence of Bacillus cereus B4264.</title>
        <authorList>
            <person name="Dodson R.J."/>
            <person name="Durkin A.S."/>
            <person name="Rosovitz M.J."/>
            <person name="Rasko D.A."/>
            <person name="Hoffmaster A."/>
            <person name="Ravel J."/>
            <person name="Sutton G."/>
        </authorList>
    </citation>
    <scope>NUCLEOTIDE SEQUENCE [LARGE SCALE GENOMIC DNA]</scope>
    <source>
        <strain>B4264</strain>
    </source>
</reference>